<dbReference type="EC" id="5.4.99.8"/>
<dbReference type="EMBL" id="DQ268870">
    <property type="protein sequence ID" value="ABB76767.1"/>
    <property type="molecule type" value="mRNA"/>
</dbReference>
<dbReference type="RefSeq" id="NP_001310632.1">
    <property type="nucleotide sequence ID" value="NM_001323703.1"/>
</dbReference>
<dbReference type="SMR" id="Q2XPU6"/>
<dbReference type="GeneID" id="8262543"/>
<dbReference type="KEGG" id="rcu:8262543"/>
<dbReference type="eggNOG" id="KOG0497">
    <property type="taxonomic scope" value="Eukaryota"/>
</dbReference>
<dbReference type="OMA" id="CWARQTI"/>
<dbReference type="OrthoDB" id="21502at2759"/>
<dbReference type="BRENDA" id="5.4.99.8">
    <property type="organism ID" value="1204"/>
</dbReference>
<dbReference type="GO" id="GO:0005811">
    <property type="term" value="C:lipid droplet"/>
    <property type="evidence" value="ECO:0007669"/>
    <property type="project" value="InterPro"/>
</dbReference>
<dbReference type="GO" id="GO:0016871">
    <property type="term" value="F:cycloartenol synthase activity"/>
    <property type="evidence" value="ECO:0000314"/>
    <property type="project" value="UniProtKB"/>
</dbReference>
<dbReference type="GO" id="GO:0010686">
    <property type="term" value="P:tetracyclic triterpenoid biosynthetic process"/>
    <property type="evidence" value="ECO:0000314"/>
    <property type="project" value="UniProtKB"/>
</dbReference>
<dbReference type="CDD" id="cd02892">
    <property type="entry name" value="SQCY_1"/>
    <property type="match status" value="1"/>
</dbReference>
<dbReference type="FunFam" id="1.50.10.20:FF:000002">
    <property type="entry name" value="Terpene cyclase/mutase family member"/>
    <property type="match status" value="1"/>
</dbReference>
<dbReference type="FunFam" id="1.50.10.20:FF:000022">
    <property type="entry name" value="Terpene cyclase/mutase family member"/>
    <property type="match status" value="1"/>
</dbReference>
<dbReference type="Gene3D" id="1.50.10.20">
    <property type="match status" value="2"/>
</dbReference>
<dbReference type="InterPro" id="IPR032696">
    <property type="entry name" value="SQ_cyclase_C"/>
</dbReference>
<dbReference type="InterPro" id="IPR032697">
    <property type="entry name" value="SQ_cyclase_N"/>
</dbReference>
<dbReference type="InterPro" id="IPR018333">
    <property type="entry name" value="Squalene_cyclase"/>
</dbReference>
<dbReference type="InterPro" id="IPR002365">
    <property type="entry name" value="Terpene_synthase_CS"/>
</dbReference>
<dbReference type="InterPro" id="IPR008930">
    <property type="entry name" value="Terpenoid_cyclase/PrenylTrfase"/>
</dbReference>
<dbReference type="NCBIfam" id="TIGR01787">
    <property type="entry name" value="squalene_cyclas"/>
    <property type="match status" value="1"/>
</dbReference>
<dbReference type="PANTHER" id="PTHR11764:SF20">
    <property type="entry name" value="LANOSTEROL SYNTHASE"/>
    <property type="match status" value="1"/>
</dbReference>
<dbReference type="PANTHER" id="PTHR11764">
    <property type="entry name" value="TERPENE CYCLASE/MUTASE FAMILY MEMBER"/>
    <property type="match status" value="1"/>
</dbReference>
<dbReference type="Pfam" id="PF13243">
    <property type="entry name" value="SQHop_cyclase_C"/>
    <property type="match status" value="1"/>
</dbReference>
<dbReference type="Pfam" id="PF13249">
    <property type="entry name" value="SQHop_cyclase_N"/>
    <property type="match status" value="1"/>
</dbReference>
<dbReference type="SFLD" id="SFLDG01016">
    <property type="entry name" value="Prenyltransferase_Like_2"/>
    <property type="match status" value="1"/>
</dbReference>
<dbReference type="SUPFAM" id="SSF48239">
    <property type="entry name" value="Terpenoid cyclases/Protein prenyltransferases"/>
    <property type="match status" value="2"/>
</dbReference>
<dbReference type="PROSITE" id="PS01074">
    <property type="entry name" value="TERPENE_SYNTHASES"/>
    <property type="match status" value="1"/>
</dbReference>
<comment type="function">
    <text evidence="2">Oxidosqualene cyclase involved in the biosynthesis of cycloartenol.</text>
</comment>
<comment type="catalytic activity">
    <reaction evidence="2">
        <text>(S)-2,3-epoxysqualene = cycloartenol</text>
        <dbReference type="Rhea" id="RHEA:21308"/>
        <dbReference type="ChEBI" id="CHEBI:15441"/>
        <dbReference type="ChEBI" id="CHEBI:17030"/>
        <dbReference type="EC" id="5.4.99.8"/>
    </reaction>
</comment>
<comment type="tissue specificity">
    <text evidence="2">Ubiquitous.</text>
</comment>
<comment type="developmental stage">
    <text evidence="2">Expressed constitutively.</text>
</comment>
<comment type="similarity">
    <text evidence="3">Belongs to the terpene cyclase/mutase family.</text>
</comment>
<feature type="chain" id="PRO_0000413993" description="Cycloartenol synthase">
    <location>
        <begin position="1"/>
        <end position="759"/>
    </location>
</feature>
<feature type="repeat" description="PFTB 1">
    <location>
        <begin position="149"/>
        <end position="190"/>
    </location>
</feature>
<feature type="repeat" description="PFTB 2">
    <location>
        <begin position="514"/>
        <end position="559"/>
    </location>
</feature>
<feature type="repeat" description="PFTB 3">
    <location>
        <begin position="591"/>
        <end position="631"/>
    </location>
</feature>
<feature type="repeat" description="PFTB 4">
    <location>
        <begin position="640"/>
        <end position="681"/>
    </location>
</feature>
<feature type="repeat" description="PFTB 5">
    <location>
        <begin position="702"/>
        <end position="743"/>
    </location>
</feature>
<feature type="active site" description="Proton donor" evidence="1">
    <location>
        <position position="485"/>
    </location>
</feature>
<organism>
    <name type="scientific">Ricinus communis</name>
    <name type="common">Castor bean</name>
    <dbReference type="NCBI Taxonomy" id="3988"/>
    <lineage>
        <taxon>Eukaryota</taxon>
        <taxon>Viridiplantae</taxon>
        <taxon>Streptophyta</taxon>
        <taxon>Embryophyta</taxon>
        <taxon>Tracheophyta</taxon>
        <taxon>Spermatophyta</taxon>
        <taxon>Magnoliopsida</taxon>
        <taxon>eudicotyledons</taxon>
        <taxon>Gunneridae</taxon>
        <taxon>Pentapetalae</taxon>
        <taxon>rosids</taxon>
        <taxon>fabids</taxon>
        <taxon>Malpighiales</taxon>
        <taxon>Euphorbiaceae</taxon>
        <taxon>Acalyphoideae</taxon>
        <taxon>Acalypheae</taxon>
        <taxon>Ricinus</taxon>
    </lineage>
</organism>
<sequence length="759" mass="86590">MWKLRIAEGSGNPWLRTTNDHIGRQVWEFDSSKIGSPEELSQIENARQNFTKNRFIHKHSSDLLMRIQFSKENPICEVLPQVKVKESEQVTEEKVKITLRRALNYYSSIQADDGHWPGDYGGPMFLMPGLIIALSITGALNAILSEEHKREMCRYLYNHQNRDGGWGLHIEGPSTMFGSVLCYVSLRLLGEGPNEGEGAVERGRNWILKHGGATAITSWGKMWLSVLGAYEWSGNNPLPPEMWLLPYILPVHPGRMWCHCRMVYLPMSYLYGKRFVGPITPTVLSLRKELYTVPYHEIDWNQARNQCAKEDLYYPHPMLQDVLWATLHKFVEPILMHWPGKRLREKAIQTAIEHIHYEDENTRYICIGPVNKVLNMLCCWVEDPNSEAFKLHLPRLYDYLWLAEDGMKMQGYNGSQLWDTAFAVQAIVSTNLIEEYGPTLKKAHSFIKKMQVLENCPGDLNFWYRHISKGAWPFSTADHGWPISDCTAEGIKALMLLSKIPSEIVGEGLNANRLYDAVNVVLSLQNGDGGFPTYELSRSYSWLEFINPAETFGDIVIDYPYVECTSAAIQALTSFRKSYPEHQREEIECCIKKAAKFMEKIQISDGSWYGSWGVCFTYGTWFGIKGLVAAGKSFGNCSSIRKACDFLLSKQCPSGGWGESYLSCQKKVYSNLEGDRSHVVNTAWAMLSLIDAGQAERDPTPLHRAARYLINAQMENGDFPQQEIMGVFNRNCMITYAAYRDIFPIWALGEYRCRVLKAS</sequence>
<reference key="1">
    <citation type="journal article" date="2006" name="Arch. Biochem. Biophys.">
        <title>Cloning and characterization of a lupeol synthase involved in the synthesis of epicuticular wax crystals on stem and hypocotyl surfaces of Ricinus communis.</title>
        <authorList>
            <person name="Guhling O."/>
            <person name="Hobl B."/>
            <person name="Yeats T."/>
            <person name="Jetter R."/>
        </authorList>
    </citation>
    <scope>NUCLEOTIDE SEQUENCE [MRNA]</scope>
    <scope>FUNCTION</scope>
    <scope>CATALYTIC ACTIVITY</scope>
    <scope>DEVELOPMENTAL STAGE</scope>
    <scope>TISSUE SPECIFICITY</scope>
</reference>
<proteinExistence type="evidence at protein level"/>
<accession>Q2XPU6</accession>
<keyword id="KW-0413">Isomerase</keyword>
<keyword id="KW-0677">Repeat</keyword>
<name>CAS1_RICCO</name>
<evidence type="ECO:0000250" key="1">
    <source>
        <dbReference type="UniProtKB" id="P48449"/>
    </source>
</evidence>
<evidence type="ECO:0000269" key="2">
    <source>
    </source>
</evidence>
<evidence type="ECO:0000305" key="3"/>
<protein>
    <recommendedName>
        <fullName>Cycloartenol synthase</fullName>
        <shortName>RcCAS</shortName>
        <ecNumber>5.4.99.8</ecNumber>
    </recommendedName>
</protein>